<dbReference type="EC" id="7.1.2.2" evidence="1"/>
<dbReference type="EMBL" id="CP000822">
    <property type="protein sequence ID" value="ABV11249.1"/>
    <property type="molecule type" value="Genomic_DNA"/>
</dbReference>
<dbReference type="RefSeq" id="WP_012000829.1">
    <property type="nucleotide sequence ID" value="NC_009792.1"/>
</dbReference>
<dbReference type="SMR" id="A8ACN6"/>
<dbReference type="STRING" id="290338.CKO_00070"/>
<dbReference type="GeneID" id="45134373"/>
<dbReference type="KEGG" id="cko:CKO_00070"/>
<dbReference type="HOGENOM" id="CLU_022398_0_2_6"/>
<dbReference type="OrthoDB" id="9801639at2"/>
<dbReference type="Proteomes" id="UP000008148">
    <property type="component" value="Chromosome"/>
</dbReference>
<dbReference type="GO" id="GO:0005886">
    <property type="term" value="C:plasma membrane"/>
    <property type="evidence" value="ECO:0007669"/>
    <property type="project" value="UniProtKB-SubCell"/>
</dbReference>
<dbReference type="GO" id="GO:0045259">
    <property type="term" value="C:proton-transporting ATP synthase complex"/>
    <property type="evidence" value="ECO:0007669"/>
    <property type="project" value="UniProtKB-KW"/>
</dbReference>
<dbReference type="GO" id="GO:0005524">
    <property type="term" value="F:ATP binding"/>
    <property type="evidence" value="ECO:0007669"/>
    <property type="project" value="UniProtKB-UniRule"/>
</dbReference>
<dbReference type="GO" id="GO:0016887">
    <property type="term" value="F:ATP hydrolysis activity"/>
    <property type="evidence" value="ECO:0007669"/>
    <property type="project" value="InterPro"/>
</dbReference>
<dbReference type="GO" id="GO:0046933">
    <property type="term" value="F:proton-transporting ATP synthase activity, rotational mechanism"/>
    <property type="evidence" value="ECO:0007669"/>
    <property type="project" value="UniProtKB-UniRule"/>
</dbReference>
<dbReference type="CDD" id="cd18110">
    <property type="entry name" value="ATP-synt_F1_beta_C"/>
    <property type="match status" value="1"/>
</dbReference>
<dbReference type="CDD" id="cd18115">
    <property type="entry name" value="ATP-synt_F1_beta_N"/>
    <property type="match status" value="1"/>
</dbReference>
<dbReference type="CDD" id="cd01133">
    <property type="entry name" value="F1-ATPase_beta_CD"/>
    <property type="match status" value="1"/>
</dbReference>
<dbReference type="FunFam" id="1.10.1140.10:FF:000001">
    <property type="entry name" value="ATP synthase subunit beta"/>
    <property type="match status" value="1"/>
</dbReference>
<dbReference type="FunFam" id="2.40.10.170:FF:000003">
    <property type="entry name" value="ATP synthase subunit beta"/>
    <property type="match status" value="1"/>
</dbReference>
<dbReference type="FunFam" id="3.40.50.300:FF:000004">
    <property type="entry name" value="ATP synthase subunit beta"/>
    <property type="match status" value="1"/>
</dbReference>
<dbReference type="Gene3D" id="2.40.10.170">
    <property type="match status" value="1"/>
</dbReference>
<dbReference type="Gene3D" id="1.10.1140.10">
    <property type="entry name" value="Bovine Mitochondrial F1-atpase, Atp Synthase Beta Chain, Chain D, domain 3"/>
    <property type="match status" value="1"/>
</dbReference>
<dbReference type="Gene3D" id="3.40.50.300">
    <property type="entry name" value="P-loop containing nucleotide triphosphate hydrolases"/>
    <property type="match status" value="1"/>
</dbReference>
<dbReference type="HAMAP" id="MF_01347">
    <property type="entry name" value="ATP_synth_beta_bact"/>
    <property type="match status" value="1"/>
</dbReference>
<dbReference type="InterPro" id="IPR003593">
    <property type="entry name" value="AAA+_ATPase"/>
</dbReference>
<dbReference type="InterPro" id="IPR055190">
    <property type="entry name" value="ATP-synt_VA_C"/>
</dbReference>
<dbReference type="InterPro" id="IPR005722">
    <property type="entry name" value="ATP_synth_F1_bsu"/>
</dbReference>
<dbReference type="InterPro" id="IPR020003">
    <property type="entry name" value="ATPase_a/bsu_AS"/>
</dbReference>
<dbReference type="InterPro" id="IPR050053">
    <property type="entry name" value="ATPase_alpha/beta_chains"/>
</dbReference>
<dbReference type="InterPro" id="IPR004100">
    <property type="entry name" value="ATPase_F1/V1/A1_a/bsu_N"/>
</dbReference>
<dbReference type="InterPro" id="IPR036121">
    <property type="entry name" value="ATPase_F1/V1/A1_a/bsu_N_sf"/>
</dbReference>
<dbReference type="InterPro" id="IPR000194">
    <property type="entry name" value="ATPase_F1/V1/A1_a/bsu_nucl-bd"/>
</dbReference>
<dbReference type="InterPro" id="IPR024034">
    <property type="entry name" value="ATPase_F1/V1_b/a_C"/>
</dbReference>
<dbReference type="InterPro" id="IPR027417">
    <property type="entry name" value="P-loop_NTPase"/>
</dbReference>
<dbReference type="NCBIfam" id="TIGR01039">
    <property type="entry name" value="atpD"/>
    <property type="match status" value="1"/>
</dbReference>
<dbReference type="PANTHER" id="PTHR15184">
    <property type="entry name" value="ATP SYNTHASE"/>
    <property type="match status" value="1"/>
</dbReference>
<dbReference type="PANTHER" id="PTHR15184:SF71">
    <property type="entry name" value="ATP SYNTHASE SUBUNIT BETA, MITOCHONDRIAL"/>
    <property type="match status" value="1"/>
</dbReference>
<dbReference type="Pfam" id="PF00006">
    <property type="entry name" value="ATP-synt_ab"/>
    <property type="match status" value="1"/>
</dbReference>
<dbReference type="Pfam" id="PF02874">
    <property type="entry name" value="ATP-synt_ab_N"/>
    <property type="match status" value="1"/>
</dbReference>
<dbReference type="Pfam" id="PF22919">
    <property type="entry name" value="ATP-synt_VA_C"/>
    <property type="match status" value="1"/>
</dbReference>
<dbReference type="SMART" id="SM00382">
    <property type="entry name" value="AAA"/>
    <property type="match status" value="1"/>
</dbReference>
<dbReference type="SUPFAM" id="SSF47917">
    <property type="entry name" value="C-terminal domain of alpha and beta subunits of F1 ATP synthase"/>
    <property type="match status" value="1"/>
</dbReference>
<dbReference type="SUPFAM" id="SSF50615">
    <property type="entry name" value="N-terminal domain of alpha and beta subunits of F1 ATP synthase"/>
    <property type="match status" value="1"/>
</dbReference>
<dbReference type="SUPFAM" id="SSF52540">
    <property type="entry name" value="P-loop containing nucleoside triphosphate hydrolases"/>
    <property type="match status" value="1"/>
</dbReference>
<dbReference type="PROSITE" id="PS00152">
    <property type="entry name" value="ATPASE_ALPHA_BETA"/>
    <property type="match status" value="1"/>
</dbReference>
<feature type="chain" id="PRO_1000055102" description="ATP synthase subunit beta">
    <location>
        <begin position="1"/>
        <end position="460"/>
    </location>
</feature>
<feature type="binding site" evidence="1">
    <location>
        <begin position="150"/>
        <end position="157"/>
    </location>
    <ligand>
        <name>ATP</name>
        <dbReference type="ChEBI" id="CHEBI:30616"/>
    </ligand>
</feature>
<protein>
    <recommendedName>
        <fullName evidence="1">ATP synthase subunit beta</fullName>
        <ecNumber evidence="1">7.1.2.2</ecNumber>
    </recommendedName>
    <alternativeName>
        <fullName evidence="1">ATP synthase F1 sector subunit beta</fullName>
    </alternativeName>
    <alternativeName>
        <fullName evidence="1">F-ATPase subunit beta</fullName>
    </alternativeName>
</protein>
<proteinExistence type="inferred from homology"/>
<name>ATPB_CITK8</name>
<sequence length="460" mass="50292">MATGKIVQVIGAVVDVEFPQDAVPRVYDALEVQNGNEHLVLEVQQQLGGGIVRTIAMGSSDGLRRGLDVKDLEHPIEVPVGKATLGRIMNVLGEPVDMKGEIGEEERWAIHRAAPSYEELSNSQELLETGIKVIDLMCPFAKGGKVGLFGGAGVGKTVNMMELIRNIAIEHSGYSVFAGVGERTREGNDFYHEMTDSNVIDKVSLVYGQMNEPPGNRLRVALTGLTMAEKFRDEGRDVLLFVDNIYRYTLAGTEVSALLGRMPSAVGYQPTLAEEMGVLQERITSTKTGSITSVQAVYVPADDLTDPSPATTFAHLDATVVLSRQIASLGIYPAVDPLDSTSRQLDPLVVGQEHYDTARGVQSILQRYQELKDIIAILGMDELSEEDKLVVARARKIQRFLSQPFFVAEVFTGSPGKYVSLKDTIRGFKGIMEGEYDHLPEQAFYMVGSIDEAVEKAKKL</sequence>
<keyword id="KW-0066">ATP synthesis</keyword>
<keyword id="KW-0067">ATP-binding</keyword>
<keyword id="KW-0997">Cell inner membrane</keyword>
<keyword id="KW-1003">Cell membrane</keyword>
<keyword id="KW-0139">CF(1)</keyword>
<keyword id="KW-0375">Hydrogen ion transport</keyword>
<keyword id="KW-0406">Ion transport</keyword>
<keyword id="KW-0472">Membrane</keyword>
<keyword id="KW-0547">Nucleotide-binding</keyword>
<keyword id="KW-1185">Reference proteome</keyword>
<keyword id="KW-1278">Translocase</keyword>
<keyword id="KW-0813">Transport</keyword>
<evidence type="ECO:0000255" key="1">
    <source>
        <dbReference type="HAMAP-Rule" id="MF_01347"/>
    </source>
</evidence>
<accession>A8ACN6</accession>
<organism>
    <name type="scientific">Citrobacter koseri (strain ATCC BAA-895 / CDC 4225-83 / SGSC4696)</name>
    <dbReference type="NCBI Taxonomy" id="290338"/>
    <lineage>
        <taxon>Bacteria</taxon>
        <taxon>Pseudomonadati</taxon>
        <taxon>Pseudomonadota</taxon>
        <taxon>Gammaproteobacteria</taxon>
        <taxon>Enterobacterales</taxon>
        <taxon>Enterobacteriaceae</taxon>
        <taxon>Citrobacter</taxon>
    </lineage>
</organism>
<gene>
    <name evidence="1" type="primary">atpD</name>
    <name type="ordered locus">CKO_00070</name>
</gene>
<reference key="1">
    <citation type="submission" date="2007-08" db="EMBL/GenBank/DDBJ databases">
        <authorList>
            <consortium name="The Citrobacter koseri Genome Sequencing Project"/>
            <person name="McClelland M."/>
            <person name="Sanderson E.K."/>
            <person name="Porwollik S."/>
            <person name="Spieth J."/>
            <person name="Clifton W.S."/>
            <person name="Latreille P."/>
            <person name="Courtney L."/>
            <person name="Wang C."/>
            <person name="Pepin K."/>
            <person name="Bhonagiri V."/>
            <person name="Nash W."/>
            <person name="Johnson M."/>
            <person name="Thiruvilangam P."/>
            <person name="Wilson R."/>
        </authorList>
    </citation>
    <scope>NUCLEOTIDE SEQUENCE [LARGE SCALE GENOMIC DNA]</scope>
    <source>
        <strain>ATCC BAA-895 / CDC 4225-83 / SGSC4696</strain>
    </source>
</reference>
<comment type="function">
    <text evidence="1">Produces ATP from ADP in the presence of a proton gradient across the membrane. The catalytic sites are hosted primarily by the beta subunits.</text>
</comment>
<comment type="catalytic activity">
    <reaction evidence="1">
        <text>ATP + H2O + 4 H(+)(in) = ADP + phosphate + 5 H(+)(out)</text>
        <dbReference type="Rhea" id="RHEA:57720"/>
        <dbReference type="ChEBI" id="CHEBI:15377"/>
        <dbReference type="ChEBI" id="CHEBI:15378"/>
        <dbReference type="ChEBI" id="CHEBI:30616"/>
        <dbReference type="ChEBI" id="CHEBI:43474"/>
        <dbReference type="ChEBI" id="CHEBI:456216"/>
        <dbReference type="EC" id="7.1.2.2"/>
    </reaction>
</comment>
<comment type="subunit">
    <text evidence="1">F-type ATPases have 2 components, CF(1) - the catalytic core - and CF(0) - the membrane proton channel. CF(1) has five subunits: alpha(3), beta(3), gamma(1), delta(1), epsilon(1). CF(0) has three main subunits: a(1), b(2) and c(9-12). The alpha and beta chains form an alternating ring which encloses part of the gamma chain. CF(1) is attached to CF(0) by a central stalk formed by the gamma and epsilon chains, while a peripheral stalk is formed by the delta and b chains.</text>
</comment>
<comment type="subcellular location">
    <subcellularLocation>
        <location evidence="1">Cell inner membrane</location>
        <topology evidence="1">Peripheral membrane protein</topology>
    </subcellularLocation>
</comment>
<comment type="similarity">
    <text evidence="1">Belongs to the ATPase alpha/beta chains family.</text>
</comment>